<comment type="subunit">
    <text evidence="1">Homodimer.</text>
</comment>
<comment type="similarity">
    <text evidence="2">Belongs to the YciI family.</text>
</comment>
<feature type="chain" id="PRO_0000168879" description="Uncharacterized protein HI_0828">
    <location>
        <begin position="1"/>
        <end position="98"/>
    </location>
</feature>
<feature type="strand" evidence="3">
    <location>
        <begin position="2"/>
        <end position="9"/>
    </location>
</feature>
<feature type="helix" evidence="3">
    <location>
        <begin position="14"/>
        <end position="19"/>
    </location>
</feature>
<feature type="helix" evidence="3">
    <location>
        <begin position="21"/>
        <end position="33"/>
    </location>
</feature>
<feature type="strand" evidence="3">
    <location>
        <begin position="37"/>
        <end position="50"/>
    </location>
</feature>
<feature type="helix" evidence="3">
    <location>
        <begin position="52"/>
        <end position="54"/>
    </location>
</feature>
<feature type="strand" evidence="3">
    <location>
        <begin position="56"/>
        <end position="64"/>
    </location>
</feature>
<feature type="helix" evidence="3">
    <location>
        <begin position="68"/>
        <end position="76"/>
    </location>
</feature>
<feature type="helix" evidence="3">
    <location>
        <begin position="79"/>
        <end position="82"/>
    </location>
</feature>
<feature type="strand" evidence="3">
    <location>
        <begin position="86"/>
        <end position="94"/>
    </location>
</feature>
<dbReference type="EMBL" id="L42023">
    <property type="protein sequence ID" value="AAC22486.1"/>
    <property type="molecule type" value="Genomic_DNA"/>
</dbReference>
<dbReference type="PIR" id="B64097">
    <property type="entry name" value="B64097"/>
</dbReference>
<dbReference type="RefSeq" id="NP_438988.1">
    <property type="nucleotide sequence ID" value="NC_000907.1"/>
</dbReference>
<dbReference type="PDB" id="1MWQ">
    <property type="method" value="X-ray"/>
    <property type="resolution" value="0.99 A"/>
    <property type="chains" value="A/B=1-98"/>
</dbReference>
<dbReference type="PDBsum" id="1MWQ"/>
<dbReference type="SMR" id="P44887"/>
<dbReference type="STRING" id="71421.HI_0828"/>
<dbReference type="EnsemblBacteria" id="AAC22486">
    <property type="protein sequence ID" value="AAC22486"/>
    <property type="gene ID" value="HI_0828"/>
</dbReference>
<dbReference type="KEGG" id="hin:HI_0828"/>
<dbReference type="PATRIC" id="fig|71421.8.peg.869"/>
<dbReference type="eggNOG" id="COG2350">
    <property type="taxonomic scope" value="Bacteria"/>
</dbReference>
<dbReference type="HOGENOM" id="CLU_110355_3_0_6"/>
<dbReference type="OrthoDB" id="9797014at2"/>
<dbReference type="PhylomeDB" id="P44887"/>
<dbReference type="BioCyc" id="HINF71421:G1GJ1-869-MONOMER"/>
<dbReference type="EvolutionaryTrace" id="P44887"/>
<dbReference type="Proteomes" id="UP000000579">
    <property type="component" value="Chromosome"/>
</dbReference>
<dbReference type="Gene3D" id="3.30.70.1060">
    <property type="entry name" value="Dimeric alpha+beta barrel"/>
    <property type="match status" value="1"/>
</dbReference>
<dbReference type="InterPro" id="IPR011008">
    <property type="entry name" value="Dimeric_a/b-barrel"/>
</dbReference>
<dbReference type="InterPro" id="IPR051807">
    <property type="entry name" value="Sec-metab_biosynth-assoc"/>
</dbReference>
<dbReference type="InterPro" id="IPR005545">
    <property type="entry name" value="YCII"/>
</dbReference>
<dbReference type="NCBIfam" id="NF008473">
    <property type="entry name" value="PRK11370.1"/>
    <property type="match status" value="1"/>
</dbReference>
<dbReference type="PANTHER" id="PTHR33606">
    <property type="entry name" value="PROTEIN YCII"/>
    <property type="match status" value="1"/>
</dbReference>
<dbReference type="PANTHER" id="PTHR33606:SF3">
    <property type="entry name" value="PROTEIN YCII"/>
    <property type="match status" value="1"/>
</dbReference>
<dbReference type="Pfam" id="PF03795">
    <property type="entry name" value="YCII"/>
    <property type="match status" value="1"/>
</dbReference>
<dbReference type="SUPFAM" id="SSF54909">
    <property type="entry name" value="Dimeric alpha+beta barrel"/>
    <property type="match status" value="1"/>
</dbReference>
<name>Y828_HAEIN</name>
<gene>
    <name type="ordered locus">HI_0828</name>
</gene>
<organism>
    <name type="scientific">Haemophilus influenzae (strain ATCC 51907 / DSM 11121 / KW20 / Rd)</name>
    <dbReference type="NCBI Taxonomy" id="71421"/>
    <lineage>
        <taxon>Bacteria</taxon>
        <taxon>Pseudomonadati</taxon>
        <taxon>Pseudomonadota</taxon>
        <taxon>Gammaproteobacteria</taxon>
        <taxon>Pasteurellales</taxon>
        <taxon>Pasteurellaceae</taxon>
        <taxon>Haemophilus</taxon>
    </lineage>
</organism>
<keyword id="KW-0002">3D-structure</keyword>
<keyword id="KW-1185">Reference proteome</keyword>
<accession>P44887</accession>
<evidence type="ECO:0000269" key="1">
    <source>
    </source>
</evidence>
<evidence type="ECO:0000305" key="2"/>
<evidence type="ECO:0007829" key="3">
    <source>
        <dbReference type="PDB" id="1MWQ"/>
    </source>
</evidence>
<sequence>MYYVIFAQDIPNTLEKRLAVREQHLARLKQLQAENRLLTAGPNPAIDDENPSEAGFTGSTVIAQFENLQAAKDWAAQDPYVEAGVYADVIVKPFKKVF</sequence>
<proteinExistence type="evidence at protein level"/>
<protein>
    <recommendedName>
        <fullName>Uncharacterized protein HI_0828</fullName>
    </recommendedName>
</protein>
<reference key="1">
    <citation type="journal article" date="1995" name="Science">
        <title>Whole-genome random sequencing and assembly of Haemophilus influenzae Rd.</title>
        <authorList>
            <person name="Fleischmann R.D."/>
            <person name="Adams M.D."/>
            <person name="White O."/>
            <person name="Clayton R.A."/>
            <person name="Kirkness E.F."/>
            <person name="Kerlavage A.R."/>
            <person name="Bult C.J."/>
            <person name="Tomb J.-F."/>
            <person name="Dougherty B.A."/>
            <person name="Merrick J.M."/>
            <person name="McKenney K."/>
            <person name="Sutton G.G."/>
            <person name="FitzHugh W."/>
            <person name="Fields C.A."/>
            <person name="Gocayne J.D."/>
            <person name="Scott J.D."/>
            <person name="Shirley R."/>
            <person name="Liu L.-I."/>
            <person name="Glodek A."/>
            <person name="Kelley J.M."/>
            <person name="Weidman J.F."/>
            <person name="Phillips C.A."/>
            <person name="Spriggs T."/>
            <person name="Hedblom E."/>
            <person name="Cotton M.D."/>
            <person name="Utterback T.R."/>
            <person name="Hanna M.C."/>
            <person name="Nguyen D.T."/>
            <person name="Saudek D.M."/>
            <person name="Brandon R.C."/>
            <person name="Fine L.D."/>
            <person name="Fritchman J.L."/>
            <person name="Fuhrmann J.L."/>
            <person name="Geoghagen N.S.M."/>
            <person name="Gnehm C.L."/>
            <person name="McDonald L.A."/>
            <person name="Small K.V."/>
            <person name="Fraser C.M."/>
            <person name="Smith H.O."/>
            <person name="Venter J.C."/>
        </authorList>
    </citation>
    <scope>NUCLEOTIDE SEQUENCE [LARGE SCALE GENOMIC DNA]</scope>
    <source>
        <strain>ATCC 51907 / DSM 11121 / KW20 / Rd</strain>
    </source>
</reference>
<reference key="2">
    <citation type="journal article" date="2000" name="Electrophoresis">
        <title>Two-dimensional map of the proteome of Haemophilus influenzae.</title>
        <authorList>
            <person name="Langen H."/>
            <person name="Takacs B."/>
            <person name="Evers S."/>
            <person name="Berndt P."/>
            <person name="Lahm H.W."/>
            <person name="Wipf B."/>
            <person name="Gray C."/>
            <person name="Fountoulakis M."/>
        </authorList>
    </citation>
    <scope>IDENTIFICATION BY MASS SPECTROMETRY</scope>
    <source>
        <strain>ATCC 51907 / DSM 11121 / KW20 / Rd</strain>
    </source>
</reference>
<reference key="3">
    <citation type="journal article" date="2005" name="Proteins">
        <title>Structure of YciI from Haemophilus influenzae (HI0828) reveals a ferredoxin-like alpha/beta-fold with a histidine/aspartate centered catalytic site.</title>
        <authorList>
            <person name="Willis M.A."/>
            <person name="Song F."/>
            <person name="Zhuang Z."/>
            <person name="Krajewski W."/>
            <person name="Chalamasetty V.R."/>
            <person name="Reddy P."/>
            <person name="Howard A."/>
            <person name="Dunaway-Mariano D."/>
            <person name="Herzberg O."/>
        </authorList>
    </citation>
    <scope>X-RAY CRYSTALLOGRAPHY (0.99 ANGSTROMS) IN COMPLEX WITH ZINC CHLORIDE</scope>
    <scope>SUBUNIT</scope>
</reference>